<name>TRMB_MYCBP</name>
<gene>
    <name evidence="2" type="primary">trmB</name>
    <name type="ordered locus">BCG_0245c</name>
</gene>
<protein>
    <recommendedName>
        <fullName evidence="2">tRNA (guanine-N(7)-)-methyltransferase</fullName>
        <ecNumber evidence="2">2.1.1.33</ecNumber>
    </recommendedName>
    <alternativeName>
        <fullName evidence="2">tRNA (guanine(46)-N(7))-methyltransferase</fullName>
    </alternativeName>
    <alternativeName>
        <fullName evidence="2">tRNA(m7G46)-methyltransferase</fullName>
    </alternativeName>
</protein>
<keyword id="KW-0489">Methyltransferase</keyword>
<keyword id="KW-0949">S-adenosyl-L-methionine</keyword>
<keyword id="KW-0808">Transferase</keyword>
<keyword id="KW-0819">tRNA processing</keyword>
<sequence length="263" mass="28547">MVHHGQMHAQPGVGLRPDTPVASGQLPSTSIRSRRSGISKAQRETWERLWPELGLLALPQSPRGTPVDTRAWFGRDAPVVLEIGSGSGTSTLAMAKAEPHVDVIAVDVYRRGLAQLLCAIDKVGSDGINIRLILGNAVDVLQHLIAPDSLCGVRVFFPDPWPKARHHKRRLLQPATMALIADRLVPSGVLHAATDHPGYAEHIAAAGDAEPRLVRVDPDTELLPISVVRPATKYERKAQLGGGAVIELLWKKHGCSERDLKIR</sequence>
<accession>A1KF28</accession>
<organism>
    <name type="scientific">Mycobacterium bovis (strain BCG / Pasteur 1173P2)</name>
    <dbReference type="NCBI Taxonomy" id="410289"/>
    <lineage>
        <taxon>Bacteria</taxon>
        <taxon>Bacillati</taxon>
        <taxon>Actinomycetota</taxon>
        <taxon>Actinomycetes</taxon>
        <taxon>Mycobacteriales</taxon>
        <taxon>Mycobacteriaceae</taxon>
        <taxon>Mycobacterium</taxon>
        <taxon>Mycobacterium tuberculosis complex</taxon>
    </lineage>
</organism>
<evidence type="ECO:0000250" key="1"/>
<evidence type="ECO:0000255" key="2">
    <source>
        <dbReference type="HAMAP-Rule" id="MF_01057"/>
    </source>
</evidence>
<evidence type="ECO:0000256" key="3">
    <source>
        <dbReference type="SAM" id="MobiDB-lite"/>
    </source>
</evidence>
<reference key="1">
    <citation type="journal article" date="2007" name="Proc. Natl. Acad. Sci. U.S.A.">
        <title>Genome plasticity of BCG and impact on vaccine efficacy.</title>
        <authorList>
            <person name="Brosch R."/>
            <person name="Gordon S.V."/>
            <person name="Garnier T."/>
            <person name="Eiglmeier K."/>
            <person name="Frigui W."/>
            <person name="Valenti P."/>
            <person name="Dos Santos S."/>
            <person name="Duthoy S."/>
            <person name="Lacroix C."/>
            <person name="Garcia-Pelayo C."/>
            <person name="Inwald J.K."/>
            <person name="Golby P."/>
            <person name="Garcia J.N."/>
            <person name="Hewinson R.G."/>
            <person name="Behr M.A."/>
            <person name="Quail M.A."/>
            <person name="Churcher C."/>
            <person name="Barrell B.G."/>
            <person name="Parkhill J."/>
            <person name="Cole S.T."/>
        </authorList>
    </citation>
    <scope>NUCLEOTIDE SEQUENCE [LARGE SCALE GENOMIC DNA]</scope>
    <source>
        <strain>BCG / Pasteur 1173P2</strain>
    </source>
</reference>
<dbReference type="EC" id="2.1.1.33" evidence="2"/>
<dbReference type="EMBL" id="AM408590">
    <property type="protein sequence ID" value="CAL70229.1"/>
    <property type="molecule type" value="Genomic_DNA"/>
</dbReference>
<dbReference type="RefSeq" id="WP_003401204.1">
    <property type="nucleotide sequence ID" value="NC_008769.1"/>
</dbReference>
<dbReference type="SMR" id="A1KF28"/>
<dbReference type="GeneID" id="45424179"/>
<dbReference type="KEGG" id="mbb:BCG_0245c"/>
<dbReference type="HOGENOM" id="CLU_050910_0_2_11"/>
<dbReference type="UniPathway" id="UPA00989"/>
<dbReference type="Proteomes" id="UP000001472">
    <property type="component" value="Chromosome"/>
</dbReference>
<dbReference type="GO" id="GO:0043527">
    <property type="term" value="C:tRNA methyltransferase complex"/>
    <property type="evidence" value="ECO:0007669"/>
    <property type="project" value="TreeGrafter"/>
</dbReference>
<dbReference type="GO" id="GO:0008176">
    <property type="term" value="F:tRNA (guanine(46)-N7)-methyltransferase activity"/>
    <property type="evidence" value="ECO:0007669"/>
    <property type="project" value="UniProtKB-UniRule"/>
</dbReference>
<dbReference type="CDD" id="cd02440">
    <property type="entry name" value="AdoMet_MTases"/>
    <property type="match status" value="1"/>
</dbReference>
<dbReference type="FunFam" id="3.40.50.150:FF:000035">
    <property type="entry name" value="tRNA (guanine-N(7)-)-methyltransferase"/>
    <property type="match status" value="1"/>
</dbReference>
<dbReference type="Gene3D" id="3.40.50.150">
    <property type="entry name" value="Vaccinia Virus protein VP39"/>
    <property type="match status" value="1"/>
</dbReference>
<dbReference type="HAMAP" id="MF_01057">
    <property type="entry name" value="tRNA_methyltr_TrmB"/>
    <property type="match status" value="1"/>
</dbReference>
<dbReference type="InterPro" id="IPR029063">
    <property type="entry name" value="SAM-dependent_MTases_sf"/>
</dbReference>
<dbReference type="InterPro" id="IPR003358">
    <property type="entry name" value="tRNA_(Gua-N-7)_MeTrfase_Trmb"/>
</dbReference>
<dbReference type="InterPro" id="IPR055361">
    <property type="entry name" value="tRNA_methyltr_TrmB_bact"/>
</dbReference>
<dbReference type="NCBIfam" id="TIGR00091">
    <property type="entry name" value="tRNA (guanosine(46)-N7)-methyltransferase TrmB"/>
    <property type="match status" value="1"/>
</dbReference>
<dbReference type="PANTHER" id="PTHR23417">
    <property type="entry name" value="3-DEOXY-D-MANNO-OCTULOSONIC-ACID TRANSFERASE/TRNA GUANINE-N 7 - -METHYLTRANSFERASE"/>
    <property type="match status" value="1"/>
</dbReference>
<dbReference type="PANTHER" id="PTHR23417:SF14">
    <property type="entry name" value="PENTACOTRIPEPTIDE-REPEAT REGION OF PRORP DOMAIN-CONTAINING PROTEIN"/>
    <property type="match status" value="1"/>
</dbReference>
<dbReference type="Pfam" id="PF02390">
    <property type="entry name" value="Methyltransf_4"/>
    <property type="match status" value="1"/>
</dbReference>
<dbReference type="SUPFAM" id="SSF53335">
    <property type="entry name" value="S-adenosyl-L-methionine-dependent methyltransferases"/>
    <property type="match status" value="1"/>
</dbReference>
<dbReference type="PROSITE" id="PS51625">
    <property type="entry name" value="SAM_MT_TRMB"/>
    <property type="match status" value="1"/>
</dbReference>
<comment type="function">
    <text evidence="2">Catalyzes the formation of N(7)-methylguanine at position 46 (m7G46) in tRNA.</text>
</comment>
<comment type="catalytic activity">
    <reaction evidence="2">
        <text>guanosine(46) in tRNA + S-adenosyl-L-methionine = N(7)-methylguanosine(46) in tRNA + S-adenosyl-L-homocysteine</text>
        <dbReference type="Rhea" id="RHEA:42708"/>
        <dbReference type="Rhea" id="RHEA-COMP:10188"/>
        <dbReference type="Rhea" id="RHEA-COMP:10189"/>
        <dbReference type="ChEBI" id="CHEBI:57856"/>
        <dbReference type="ChEBI" id="CHEBI:59789"/>
        <dbReference type="ChEBI" id="CHEBI:74269"/>
        <dbReference type="ChEBI" id="CHEBI:74480"/>
        <dbReference type="EC" id="2.1.1.33"/>
    </reaction>
</comment>
<comment type="pathway">
    <text evidence="2">tRNA modification; N(7)-methylguanine-tRNA biosynthesis.</text>
</comment>
<comment type="similarity">
    <text evidence="2">Belongs to the class I-like SAM-binding methyltransferase superfamily. TrmB family.</text>
</comment>
<feature type="chain" id="PRO_0000288181" description="tRNA (guanine-N(7)-)-methyltransferase">
    <location>
        <begin position="1"/>
        <end position="263"/>
    </location>
</feature>
<feature type="region of interest" description="Disordered" evidence="3">
    <location>
        <begin position="1"/>
        <end position="39"/>
    </location>
</feature>
<feature type="active site" evidence="1">
    <location>
        <position position="159"/>
    </location>
</feature>
<feature type="binding site" evidence="2">
    <location>
        <position position="82"/>
    </location>
    <ligand>
        <name>S-adenosyl-L-methionine</name>
        <dbReference type="ChEBI" id="CHEBI:59789"/>
    </ligand>
</feature>
<feature type="binding site" evidence="2">
    <location>
        <position position="107"/>
    </location>
    <ligand>
        <name>S-adenosyl-L-methionine</name>
        <dbReference type="ChEBI" id="CHEBI:59789"/>
    </ligand>
</feature>
<feature type="binding site" evidence="2">
    <location>
        <position position="136"/>
    </location>
    <ligand>
        <name>S-adenosyl-L-methionine</name>
        <dbReference type="ChEBI" id="CHEBI:59789"/>
    </ligand>
</feature>
<feature type="binding site" evidence="2">
    <location>
        <position position="159"/>
    </location>
    <ligand>
        <name>S-adenosyl-L-methionine</name>
        <dbReference type="ChEBI" id="CHEBI:59789"/>
    </ligand>
</feature>
<feature type="binding site" evidence="2">
    <location>
        <position position="163"/>
    </location>
    <ligand>
        <name>substrate</name>
    </ligand>
</feature>
<feature type="binding site" evidence="2">
    <location>
        <position position="195"/>
    </location>
    <ligand>
        <name>substrate</name>
    </ligand>
</feature>
<feature type="binding site" evidence="2">
    <location>
        <begin position="232"/>
        <end position="235"/>
    </location>
    <ligand>
        <name>substrate</name>
    </ligand>
</feature>
<proteinExistence type="inferred from homology"/>